<organismHost>
    <name type="scientific">Aedes vexans</name>
    <name type="common">Inland floodwater mosquito</name>
    <name type="synonym">Culex vexans</name>
    <dbReference type="NCBI Taxonomy" id="7163"/>
</organismHost>
<organismHost>
    <name type="scientific">Culex territans</name>
    <dbReference type="NCBI Taxonomy" id="42431"/>
</organismHost>
<organismHost>
    <name type="scientific">Culiseta annulata</name>
    <dbReference type="NCBI Taxonomy" id="332058"/>
</organismHost>
<organismHost>
    <name type="scientific">Ochlerotatus sollicitans</name>
    <name type="common">eastern saltmarsh mosquito</name>
    <dbReference type="NCBI Taxonomy" id="310513"/>
</organismHost>
<organismHost>
    <name type="scientific">Ochlerotatus taeniorhynchus</name>
    <name type="common">Black salt marsh mosquito</name>
    <name type="synonym">Aedes taeniorhynchus</name>
    <dbReference type="NCBI Taxonomy" id="329105"/>
</organismHost>
<organismHost>
    <name type="scientific">Psorophora ferox</name>
    <dbReference type="NCBI Taxonomy" id="7183"/>
</organismHost>
<feature type="chain" id="PRO_0000377428" description="Putative membrane protein 047R">
    <location>
        <begin position="1"/>
        <end position="407"/>
    </location>
</feature>
<feature type="transmembrane region" description="Helical" evidence="1">
    <location>
        <begin position="355"/>
        <end position="372"/>
    </location>
</feature>
<feature type="transmembrane region" description="Helical" evidence="1">
    <location>
        <begin position="385"/>
        <end position="403"/>
    </location>
</feature>
<feature type="region of interest" description="Disordered" evidence="2">
    <location>
        <begin position="265"/>
        <end position="337"/>
    </location>
</feature>
<feature type="compositionally biased region" description="Pro residues" evidence="2">
    <location>
        <begin position="271"/>
        <end position="337"/>
    </location>
</feature>
<accession>Q197B3</accession>
<gene>
    <name type="ORF">IIV3-047R</name>
</gene>
<name>VF337_IIV3</name>
<proteinExistence type="inferred from homology"/>
<keyword id="KW-0472">Membrane</keyword>
<keyword id="KW-1185">Reference proteome</keyword>
<keyword id="KW-0812">Transmembrane</keyword>
<keyword id="KW-1133">Transmembrane helix</keyword>
<keyword id="KW-0946">Virion</keyword>
<dbReference type="EMBL" id="DQ643392">
    <property type="protein sequence ID" value="ABF82077.1"/>
    <property type="molecule type" value="Genomic_DNA"/>
</dbReference>
<dbReference type="RefSeq" id="YP_654619.1">
    <property type="nucleotide sequence ID" value="NC_008187.1"/>
</dbReference>
<dbReference type="KEGG" id="vg:4156273"/>
<dbReference type="OrthoDB" id="4843at10239"/>
<dbReference type="Proteomes" id="UP000001358">
    <property type="component" value="Genome"/>
</dbReference>
<dbReference type="GO" id="GO:0016020">
    <property type="term" value="C:membrane"/>
    <property type="evidence" value="ECO:0007669"/>
    <property type="project" value="UniProtKB-KW"/>
</dbReference>
<dbReference type="GO" id="GO:0055036">
    <property type="term" value="C:virion membrane"/>
    <property type="evidence" value="ECO:0007669"/>
    <property type="project" value="UniProtKB-SubCell"/>
</dbReference>
<dbReference type="PANTHER" id="PTHR48148">
    <property type="entry name" value="KERATINOCYTE PROLINE-RICH PROTEIN"/>
    <property type="match status" value="1"/>
</dbReference>
<dbReference type="PANTHER" id="PTHR48148:SF3">
    <property type="entry name" value="KERATINOCYTE PROLINE-RICH PROTEIN"/>
    <property type="match status" value="1"/>
</dbReference>
<dbReference type="PRINTS" id="PR01217">
    <property type="entry name" value="PRICHEXTENSN"/>
</dbReference>
<organism>
    <name type="scientific">Invertebrate iridescent virus 3</name>
    <name type="common">IIV-3</name>
    <name type="synonym">Mosquito iridescent virus</name>
    <dbReference type="NCBI Taxonomy" id="345201"/>
    <lineage>
        <taxon>Viruses</taxon>
        <taxon>Varidnaviria</taxon>
        <taxon>Bamfordvirae</taxon>
        <taxon>Nucleocytoviricota</taxon>
        <taxon>Megaviricetes</taxon>
        <taxon>Pimascovirales</taxon>
        <taxon>Iridoviridae</taxon>
        <taxon>Betairidovirinae</taxon>
        <taxon>Chloriridovirus</taxon>
    </lineage>
</organism>
<evidence type="ECO:0000255" key="1"/>
<evidence type="ECO:0000256" key="2">
    <source>
        <dbReference type="SAM" id="MobiDB-lite"/>
    </source>
</evidence>
<evidence type="ECO:0000305" key="3"/>
<protein>
    <recommendedName>
        <fullName>Putative membrane protein 047R</fullName>
    </recommendedName>
</protein>
<comment type="subcellular location">
    <subcellularLocation>
        <location evidence="3">Virion membrane</location>
        <topology evidence="3">Multi-pass membrane protein</topology>
    </subcellularLocation>
</comment>
<comment type="similarity">
    <text evidence="3">Belongs to the IIV-6 337L family.</text>
</comment>
<reference key="1">
    <citation type="journal article" date="2006" name="J. Virol.">
        <title>Genome of invertebrate iridescent virus type 3 (mosquito iridescent virus).</title>
        <authorList>
            <person name="Delhon G."/>
            <person name="Tulman E.R."/>
            <person name="Afonso C.L."/>
            <person name="Lu Z."/>
            <person name="Becnel J.J."/>
            <person name="Moser B.A."/>
            <person name="Kutish G.F."/>
            <person name="Rock D.L."/>
        </authorList>
    </citation>
    <scope>NUCLEOTIDE SEQUENCE [LARGE SCALE GENOMIC DNA]</scope>
</reference>
<sequence>MSSIVNGFSIQKSTKTAYDTQQPCDCWDCSAFTAVVGCGQTDGMDDWEFGETACCFTCPNKKQCAKPDPAECNIGTDSHQRDPLTRVTWNGRGPNVQCVYDVNRINTLEQIDNFKQRFGVHGDYNAVVANYCQQSSDSCITDPETGTKMTKCSRFKSDQKDGELCRGWFNQQPKAVQDTVVQNYCAVNNTPDCKCVNRAQNEVYRELKIGKVINDGCWFTPCANPQSYLLTTEVENPTCPSNFCDIIYNIIKDRDVTIDDVKNDINCVFKPDPPPQPKPQPPPDPPKPPPDPPKPDPPPPPPPKPTPPPDPPKPKPDPVPPPKPTPPPPKPTPPPPIPPQPVPILPIPPVDLKKNWIMLTFVGLVLALVIYPKSRHAIGTHTWRNAAIAVLVGLNAFGLQSYVNNHV</sequence>